<name>MNME_BURM9</name>
<organism>
    <name type="scientific">Burkholderia mallei (strain NCTC 10229)</name>
    <dbReference type="NCBI Taxonomy" id="412022"/>
    <lineage>
        <taxon>Bacteria</taxon>
        <taxon>Pseudomonadati</taxon>
        <taxon>Pseudomonadota</taxon>
        <taxon>Betaproteobacteria</taxon>
        <taxon>Burkholderiales</taxon>
        <taxon>Burkholderiaceae</taxon>
        <taxon>Burkholderia</taxon>
        <taxon>pseudomallei group</taxon>
    </lineage>
</organism>
<gene>
    <name evidence="1" type="primary">mnmE</name>
    <name evidence="1" type="synonym">trmE</name>
    <name type="ordered locus">BMA10229_A2243</name>
</gene>
<protein>
    <recommendedName>
        <fullName evidence="1">tRNA modification GTPase MnmE</fullName>
        <ecNumber evidence="1">3.6.-.-</ecNumber>
    </recommendedName>
</protein>
<accession>A2S8D8</accession>
<sequence length="467" mass="49453">MLATDSDPIVAIATASGRGGIGVVRLSLGRAGEAAARALSDALCGARLMPRHASYVPFLDGAGEPLDRGIALYFPAPHSYTGEHVIELQGHGGPIVLQLLLQRCLDAGRAHGLRLAEPGEFTRRAFLNDKLDLAQAEAVADLIEASTEAAARSAGRSLDGAFSRDIHALVDDVIALRMLVEATLDFPEEEIDFLEAADARGKLAHIRERLAHVLGDARQGALLREGLSVVLAGQPNVGKSSLLNALAGAELAIVTPIAGTTRDKVAQTIQIEGIPLHIIDTAGLRETEDEVEKIGIARTWGEIERADVVLHLLDARSGLGPGDEAIAARFPDGVPVVRVLNKTDLTGAPASVTRTGGGAARADVCEVRLSAKRGDGIDLLRGELLRIAGWQAGAESVYLARERHLIALRAAQAHLARAAEHAEQNAQALDLFAEELRLAQERLNSITGEFTSDDLLGVIFSRFCIGK</sequence>
<keyword id="KW-0963">Cytoplasm</keyword>
<keyword id="KW-0342">GTP-binding</keyword>
<keyword id="KW-0378">Hydrolase</keyword>
<keyword id="KW-0460">Magnesium</keyword>
<keyword id="KW-0479">Metal-binding</keyword>
<keyword id="KW-0547">Nucleotide-binding</keyword>
<keyword id="KW-0630">Potassium</keyword>
<keyword id="KW-0819">tRNA processing</keyword>
<reference key="1">
    <citation type="journal article" date="2010" name="Genome Biol. Evol.">
        <title>Continuing evolution of Burkholderia mallei through genome reduction and large-scale rearrangements.</title>
        <authorList>
            <person name="Losada L."/>
            <person name="Ronning C.M."/>
            <person name="DeShazer D."/>
            <person name="Woods D."/>
            <person name="Fedorova N."/>
            <person name="Kim H.S."/>
            <person name="Shabalina S.A."/>
            <person name="Pearson T.R."/>
            <person name="Brinkac L."/>
            <person name="Tan P."/>
            <person name="Nandi T."/>
            <person name="Crabtree J."/>
            <person name="Badger J."/>
            <person name="Beckstrom-Sternberg S."/>
            <person name="Saqib M."/>
            <person name="Schutzer S.E."/>
            <person name="Keim P."/>
            <person name="Nierman W.C."/>
        </authorList>
    </citation>
    <scope>NUCLEOTIDE SEQUENCE [LARGE SCALE GENOMIC DNA]</scope>
    <source>
        <strain>NCTC 10229</strain>
    </source>
</reference>
<comment type="function">
    <text evidence="1">Exhibits a very high intrinsic GTPase hydrolysis rate. Involved in the addition of a carboxymethylaminomethyl (cmnm) group at the wobble position (U34) of certain tRNAs, forming tRNA-cmnm(5)s(2)U34.</text>
</comment>
<comment type="cofactor">
    <cofactor evidence="1">
        <name>K(+)</name>
        <dbReference type="ChEBI" id="CHEBI:29103"/>
    </cofactor>
    <text evidence="1">Binds 1 potassium ion per subunit.</text>
</comment>
<comment type="subunit">
    <text evidence="1">Homodimer. Heterotetramer of two MnmE and two MnmG subunits.</text>
</comment>
<comment type="subcellular location">
    <subcellularLocation>
        <location evidence="1">Cytoplasm</location>
    </subcellularLocation>
</comment>
<comment type="similarity">
    <text evidence="1">Belongs to the TRAFAC class TrmE-Era-EngA-EngB-Septin-like GTPase superfamily. TrmE GTPase family.</text>
</comment>
<comment type="sequence caution" evidence="2">
    <conflict type="erroneous initiation">
        <sequence resource="EMBL-CDS" id="ABN01656"/>
    </conflict>
</comment>
<proteinExistence type="inferred from homology"/>
<dbReference type="EC" id="3.6.-.-" evidence="1"/>
<dbReference type="EMBL" id="CP000546">
    <property type="protein sequence ID" value="ABN01656.1"/>
    <property type="status" value="ALT_INIT"/>
    <property type="molecule type" value="Genomic_DNA"/>
</dbReference>
<dbReference type="RefSeq" id="WP_004524586.1">
    <property type="nucleotide sequence ID" value="NC_008836.1"/>
</dbReference>
<dbReference type="SMR" id="A2S8D8"/>
<dbReference type="GeneID" id="93058592"/>
<dbReference type="KEGG" id="bml:BMA10229_A2243"/>
<dbReference type="HOGENOM" id="CLU_019624_4_1_4"/>
<dbReference type="Proteomes" id="UP000002283">
    <property type="component" value="Chromosome I"/>
</dbReference>
<dbReference type="GO" id="GO:0005829">
    <property type="term" value="C:cytosol"/>
    <property type="evidence" value="ECO:0007669"/>
    <property type="project" value="TreeGrafter"/>
</dbReference>
<dbReference type="GO" id="GO:0005525">
    <property type="term" value="F:GTP binding"/>
    <property type="evidence" value="ECO:0007669"/>
    <property type="project" value="UniProtKB-UniRule"/>
</dbReference>
<dbReference type="GO" id="GO:0003924">
    <property type="term" value="F:GTPase activity"/>
    <property type="evidence" value="ECO:0007669"/>
    <property type="project" value="UniProtKB-UniRule"/>
</dbReference>
<dbReference type="GO" id="GO:0046872">
    <property type="term" value="F:metal ion binding"/>
    <property type="evidence" value="ECO:0007669"/>
    <property type="project" value="UniProtKB-KW"/>
</dbReference>
<dbReference type="GO" id="GO:0030488">
    <property type="term" value="P:tRNA methylation"/>
    <property type="evidence" value="ECO:0007669"/>
    <property type="project" value="TreeGrafter"/>
</dbReference>
<dbReference type="GO" id="GO:0002098">
    <property type="term" value="P:tRNA wobble uridine modification"/>
    <property type="evidence" value="ECO:0007669"/>
    <property type="project" value="TreeGrafter"/>
</dbReference>
<dbReference type="CDD" id="cd04164">
    <property type="entry name" value="trmE"/>
    <property type="match status" value="1"/>
</dbReference>
<dbReference type="CDD" id="cd14858">
    <property type="entry name" value="TrmE_N"/>
    <property type="match status" value="1"/>
</dbReference>
<dbReference type="Gene3D" id="3.40.50.300">
    <property type="entry name" value="P-loop containing nucleotide triphosphate hydrolases"/>
    <property type="match status" value="1"/>
</dbReference>
<dbReference type="Gene3D" id="3.30.1360.120">
    <property type="entry name" value="Probable tRNA modification gtpase trme, domain 1"/>
    <property type="match status" value="1"/>
</dbReference>
<dbReference type="Gene3D" id="1.20.120.430">
    <property type="entry name" value="tRNA modification GTPase MnmE domain 2"/>
    <property type="match status" value="1"/>
</dbReference>
<dbReference type="HAMAP" id="MF_00379">
    <property type="entry name" value="GTPase_MnmE"/>
    <property type="match status" value="1"/>
</dbReference>
<dbReference type="InterPro" id="IPR031168">
    <property type="entry name" value="G_TrmE"/>
</dbReference>
<dbReference type="InterPro" id="IPR006073">
    <property type="entry name" value="GTP-bd"/>
</dbReference>
<dbReference type="InterPro" id="IPR018948">
    <property type="entry name" value="GTP-bd_TrmE_N"/>
</dbReference>
<dbReference type="InterPro" id="IPR004520">
    <property type="entry name" value="GTPase_MnmE"/>
</dbReference>
<dbReference type="InterPro" id="IPR027368">
    <property type="entry name" value="MnmE_dom2"/>
</dbReference>
<dbReference type="InterPro" id="IPR025867">
    <property type="entry name" value="MnmE_helical"/>
</dbReference>
<dbReference type="InterPro" id="IPR027417">
    <property type="entry name" value="P-loop_NTPase"/>
</dbReference>
<dbReference type="InterPro" id="IPR005225">
    <property type="entry name" value="Small_GTP-bd"/>
</dbReference>
<dbReference type="InterPro" id="IPR027266">
    <property type="entry name" value="TrmE/GcvT_dom1"/>
</dbReference>
<dbReference type="NCBIfam" id="TIGR00450">
    <property type="entry name" value="mnmE_trmE_thdF"/>
    <property type="match status" value="1"/>
</dbReference>
<dbReference type="NCBIfam" id="NF003661">
    <property type="entry name" value="PRK05291.1-3"/>
    <property type="match status" value="1"/>
</dbReference>
<dbReference type="NCBIfam" id="TIGR00231">
    <property type="entry name" value="small_GTP"/>
    <property type="match status" value="1"/>
</dbReference>
<dbReference type="PANTHER" id="PTHR42714">
    <property type="entry name" value="TRNA MODIFICATION GTPASE GTPBP3"/>
    <property type="match status" value="1"/>
</dbReference>
<dbReference type="PANTHER" id="PTHR42714:SF2">
    <property type="entry name" value="TRNA MODIFICATION GTPASE GTPBP3, MITOCHONDRIAL"/>
    <property type="match status" value="1"/>
</dbReference>
<dbReference type="Pfam" id="PF01926">
    <property type="entry name" value="MMR_HSR1"/>
    <property type="match status" value="1"/>
</dbReference>
<dbReference type="Pfam" id="PF12631">
    <property type="entry name" value="MnmE_helical"/>
    <property type="match status" value="1"/>
</dbReference>
<dbReference type="Pfam" id="PF10396">
    <property type="entry name" value="TrmE_N"/>
    <property type="match status" value="1"/>
</dbReference>
<dbReference type="PRINTS" id="PR00326">
    <property type="entry name" value="GTP1OBG"/>
</dbReference>
<dbReference type="SUPFAM" id="SSF52540">
    <property type="entry name" value="P-loop containing nucleoside triphosphate hydrolases"/>
    <property type="match status" value="1"/>
</dbReference>
<dbReference type="SUPFAM" id="SSF116878">
    <property type="entry name" value="TrmE connector domain"/>
    <property type="match status" value="1"/>
</dbReference>
<dbReference type="PROSITE" id="PS51709">
    <property type="entry name" value="G_TRME"/>
    <property type="match status" value="1"/>
</dbReference>
<evidence type="ECO:0000255" key="1">
    <source>
        <dbReference type="HAMAP-Rule" id="MF_00379"/>
    </source>
</evidence>
<evidence type="ECO:0000305" key="2"/>
<feature type="chain" id="PRO_0000345741" description="tRNA modification GTPase MnmE">
    <location>
        <begin position="1"/>
        <end position="467"/>
    </location>
</feature>
<feature type="domain" description="TrmE-type G">
    <location>
        <begin position="226"/>
        <end position="389"/>
    </location>
</feature>
<feature type="binding site" evidence="1">
    <location>
        <position position="25"/>
    </location>
    <ligand>
        <name>(6S)-5-formyl-5,6,7,8-tetrahydrofolate</name>
        <dbReference type="ChEBI" id="CHEBI:57457"/>
    </ligand>
</feature>
<feature type="binding site" evidence="1">
    <location>
        <position position="87"/>
    </location>
    <ligand>
        <name>(6S)-5-formyl-5,6,7,8-tetrahydrofolate</name>
        <dbReference type="ChEBI" id="CHEBI:57457"/>
    </ligand>
</feature>
<feature type="binding site" evidence="1">
    <location>
        <position position="130"/>
    </location>
    <ligand>
        <name>(6S)-5-formyl-5,6,7,8-tetrahydrofolate</name>
        <dbReference type="ChEBI" id="CHEBI:57457"/>
    </ligand>
</feature>
<feature type="binding site" evidence="1">
    <location>
        <begin position="236"/>
        <end position="241"/>
    </location>
    <ligand>
        <name>GTP</name>
        <dbReference type="ChEBI" id="CHEBI:37565"/>
    </ligand>
</feature>
<feature type="binding site" evidence="1">
    <location>
        <position position="236"/>
    </location>
    <ligand>
        <name>K(+)</name>
        <dbReference type="ChEBI" id="CHEBI:29103"/>
    </ligand>
</feature>
<feature type="binding site" evidence="1">
    <location>
        <position position="240"/>
    </location>
    <ligand>
        <name>Mg(2+)</name>
        <dbReference type="ChEBI" id="CHEBI:18420"/>
    </ligand>
</feature>
<feature type="binding site" evidence="1">
    <location>
        <begin position="255"/>
        <end position="261"/>
    </location>
    <ligand>
        <name>GTP</name>
        <dbReference type="ChEBI" id="CHEBI:37565"/>
    </ligand>
</feature>
<feature type="binding site" evidence="1">
    <location>
        <position position="255"/>
    </location>
    <ligand>
        <name>K(+)</name>
        <dbReference type="ChEBI" id="CHEBI:29103"/>
    </ligand>
</feature>
<feature type="binding site" evidence="1">
    <location>
        <position position="257"/>
    </location>
    <ligand>
        <name>K(+)</name>
        <dbReference type="ChEBI" id="CHEBI:29103"/>
    </ligand>
</feature>
<feature type="binding site" evidence="1">
    <location>
        <position position="260"/>
    </location>
    <ligand>
        <name>K(+)</name>
        <dbReference type="ChEBI" id="CHEBI:29103"/>
    </ligand>
</feature>
<feature type="binding site" evidence="1">
    <location>
        <position position="261"/>
    </location>
    <ligand>
        <name>Mg(2+)</name>
        <dbReference type="ChEBI" id="CHEBI:18420"/>
    </ligand>
</feature>
<feature type="binding site" evidence="1">
    <location>
        <begin position="280"/>
        <end position="283"/>
    </location>
    <ligand>
        <name>GTP</name>
        <dbReference type="ChEBI" id="CHEBI:37565"/>
    </ligand>
</feature>
<feature type="binding site" evidence="1">
    <location>
        <position position="467"/>
    </location>
    <ligand>
        <name>(6S)-5-formyl-5,6,7,8-tetrahydrofolate</name>
        <dbReference type="ChEBI" id="CHEBI:57457"/>
    </ligand>
</feature>